<dbReference type="EMBL" id="AE000666">
    <property type="protein sequence ID" value="AAB85884.1"/>
    <property type="molecule type" value="Genomic_DNA"/>
</dbReference>
<dbReference type="PIR" id="D69054">
    <property type="entry name" value="D69054"/>
</dbReference>
<dbReference type="SMR" id="O27458"/>
<dbReference type="FunCoup" id="O27458">
    <property type="interactions" value="2"/>
</dbReference>
<dbReference type="STRING" id="187420.MTH_1407"/>
<dbReference type="PaxDb" id="187420-MTH_1407"/>
<dbReference type="EnsemblBacteria" id="AAB85884">
    <property type="protein sequence ID" value="AAB85884"/>
    <property type="gene ID" value="MTH_1407"/>
</dbReference>
<dbReference type="KEGG" id="mth:MTH_1407"/>
<dbReference type="PATRIC" id="fig|187420.15.peg.1372"/>
<dbReference type="HOGENOM" id="CLU_165882_1_0_2"/>
<dbReference type="InParanoid" id="O27458"/>
<dbReference type="Proteomes" id="UP000005223">
    <property type="component" value="Chromosome"/>
</dbReference>
<dbReference type="Gene3D" id="1.20.1440.50">
    <property type="entry name" value="Ta0600-like"/>
    <property type="match status" value="1"/>
</dbReference>
<dbReference type="HAMAP" id="MF_00342">
    <property type="entry name" value="UPF0147"/>
    <property type="match status" value="1"/>
</dbReference>
<dbReference type="InterPro" id="IPR023130">
    <property type="entry name" value="Ta0600-like_sf"/>
</dbReference>
<dbReference type="InterPro" id="IPR005354">
    <property type="entry name" value="UPF0147"/>
</dbReference>
<dbReference type="NCBIfam" id="NF003319">
    <property type="entry name" value="PRK04330.1"/>
    <property type="match status" value="1"/>
</dbReference>
<dbReference type="Pfam" id="PF03685">
    <property type="entry name" value="UPF0147"/>
    <property type="match status" value="1"/>
</dbReference>
<dbReference type="SUPFAM" id="SSF158436">
    <property type="entry name" value="Ta0600-like"/>
    <property type="match status" value="1"/>
</dbReference>
<name>Y1407_METTH</name>
<comment type="similarity">
    <text evidence="1">Belongs to the UPF0147 family.</text>
</comment>
<proteinExistence type="inferred from homology"/>
<accession>O27458</accession>
<protein>
    <recommendedName>
        <fullName>UPF0147 protein MTH_1407</fullName>
    </recommendedName>
</protein>
<sequence length="102" mass="11673">MNINIILYSSRIQQGGLNMSNETFNRVSEILRHIMEDNSVPRNIRRAAEESNEILNNPDEDSTVRASTVISILDEISNDPNIPIHARTLVWEILSELESIRE</sequence>
<reference key="1">
    <citation type="journal article" date="1997" name="J. Bacteriol.">
        <title>Complete genome sequence of Methanobacterium thermoautotrophicum deltaH: functional analysis and comparative genomics.</title>
        <authorList>
            <person name="Smith D.R."/>
            <person name="Doucette-Stamm L.A."/>
            <person name="Deloughery C."/>
            <person name="Lee H.-M."/>
            <person name="Dubois J."/>
            <person name="Aldredge T."/>
            <person name="Bashirzadeh R."/>
            <person name="Blakely D."/>
            <person name="Cook R."/>
            <person name="Gilbert K."/>
            <person name="Harrison D."/>
            <person name="Hoang L."/>
            <person name="Keagle P."/>
            <person name="Lumm W."/>
            <person name="Pothier B."/>
            <person name="Qiu D."/>
            <person name="Spadafora R."/>
            <person name="Vicare R."/>
            <person name="Wang Y."/>
            <person name="Wierzbowski J."/>
            <person name="Gibson R."/>
            <person name="Jiwani N."/>
            <person name="Caruso A."/>
            <person name="Bush D."/>
            <person name="Safer H."/>
            <person name="Patwell D."/>
            <person name="Prabhakar S."/>
            <person name="McDougall S."/>
            <person name="Shimer G."/>
            <person name="Goyal A."/>
            <person name="Pietrovski S."/>
            <person name="Church G.M."/>
            <person name="Daniels C.J."/>
            <person name="Mao J.-I."/>
            <person name="Rice P."/>
            <person name="Noelling J."/>
            <person name="Reeve J.N."/>
        </authorList>
    </citation>
    <scope>NUCLEOTIDE SEQUENCE [LARGE SCALE GENOMIC DNA]</scope>
    <source>
        <strain>ATCC 29096 / DSM 1053 / JCM 10044 / NBRC 100330 / Delta H</strain>
    </source>
</reference>
<feature type="chain" id="PRO_0000150911" description="UPF0147 protein MTH_1407">
    <location>
        <begin position="1"/>
        <end position="102"/>
    </location>
</feature>
<organism>
    <name type="scientific">Methanothermobacter thermautotrophicus (strain ATCC 29096 / DSM 1053 / JCM 10044 / NBRC 100330 / Delta H)</name>
    <name type="common">Methanobacterium thermoautotrophicum</name>
    <dbReference type="NCBI Taxonomy" id="187420"/>
    <lineage>
        <taxon>Archaea</taxon>
        <taxon>Methanobacteriati</taxon>
        <taxon>Methanobacteriota</taxon>
        <taxon>Methanomada group</taxon>
        <taxon>Methanobacteria</taxon>
        <taxon>Methanobacteriales</taxon>
        <taxon>Methanobacteriaceae</taxon>
        <taxon>Methanothermobacter</taxon>
    </lineage>
</organism>
<evidence type="ECO:0000305" key="1"/>
<keyword id="KW-1185">Reference proteome</keyword>
<gene>
    <name type="ordered locus">MTH_1407</name>
</gene>